<sequence>MARALVLLSVVLVSLLVNQGTASENQRLFNNAVIRVQHLHQLAAKMINDFEDNLLPEERRQLSKIFPLSFCNSDSIEAPTGKDETQKSSMLKLLRISFRLIESWEFPSQTLSGAVSNSLTVGNPNQITEKLADLKVGISVLIKGCLDGQPNMDDNDSLPLPFEDFYLTMGESSLRESFRLLACFKKDMHKVETYLRVANCRRSLDSNCTL</sequence>
<protein>
    <recommendedName>
        <fullName>Somatotropin</fullName>
    </recommendedName>
    <alternativeName>
        <fullName>Growth hormone</fullName>
    </alternativeName>
</protein>
<feature type="signal peptide" evidence="1">
    <location>
        <begin position="1"/>
        <end position="23"/>
    </location>
</feature>
<feature type="chain" id="PRO_0000033025" description="Somatotropin">
    <location>
        <begin position="24"/>
        <end position="210"/>
    </location>
</feature>
<feature type="binding site" evidence="1">
    <location>
        <position position="38"/>
    </location>
    <ligand>
        <name>Zn(2+)</name>
        <dbReference type="ChEBI" id="CHEBI:29105"/>
    </ligand>
</feature>
<feature type="binding site" evidence="1">
    <location>
        <position position="192"/>
    </location>
    <ligand>
        <name>Zn(2+)</name>
        <dbReference type="ChEBI" id="CHEBI:29105"/>
    </ligand>
</feature>
<feature type="disulfide bond" evidence="1">
    <location>
        <begin position="71"/>
        <end position="183"/>
    </location>
</feature>
<feature type="disulfide bond" evidence="1">
    <location>
        <begin position="200"/>
        <end position="208"/>
    </location>
</feature>
<name>SOMA_HYPMO</name>
<reference key="1">
    <citation type="journal article" date="1992" name="Gen. Comp. Endocrinol.">
        <title>The primary structures of growth hormones of three cyprinid species: bighead carp, silver carp, and grass carp.</title>
        <authorList>
            <person name="Chang Y.S."/>
            <person name="Liu C.S."/>
            <person name="Huang F.-L."/>
            <person name="Lo T.B."/>
        </authorList>
    </citation>
    <scope>NUCLEOTIDE SEQUENCE [MRNA]</scope>
    <source>
        <tissue>Pituitary</tissue>
    </source>
</reference>
<gene>
    <name type="primary">gh</name>
</gene>
<dbReference type="EMBL" id="X60475">
    <property type="protein sequence ID" value="CAA43008.1"/>
    <property type="molecule type" value="mRNA"/>
</dbReference>
<dbReference type="PIR" id="S21915">
    <property type="entry name" value="S21915"/>
</dbReference>
<dbReference type="SMR" id="P69159"/>
<dbReference type="GO" id="GO:0005615">
    <property type="term" value="C:extracellular space"/>
    <property type="evidence" value="ECO:0007669"/>
    <property type="project" value="InterPro"/>
</dbReference>
<dbReference type="GO" id="GO:0070186">
    <property type="term" value="F:growth hormone activity"/>
    <property type="evidence" value="ECO:0007669"/>
    <property type="project" value="TreeGrafter"/>
</dbReference>
<dbReference type="GO" id="GO:0005131">
    <property type="term" value="F:growth hormone receptor binding"/>
    <property type="evidence" value="ECO:0007669"/>
    <property type="project" value="InterPro"/>
</dbReference>
<dbReference type="GO" id="GO:0046872">
    <property type="term" value="F:metal ion binding"/>
    <property type="evidence" value="ECO:0007669"/>
    <property type="project" value="UniProtKB-KW"/>
</dbReference>
<dbReference type="GO" id="GO:0048513">
    <property type="term" value="P:animal organ development"/>
    <property type="evidence" value="ECO:0007669"/>
    <property type="project" value="TreeGrafter"/>
</dbReference>
<dbReference type="GO" id="GO:0060396">
    <property type="term" value="P:growth hormone receptor signaling pathway"/>
    <property type="evidence" value="ECO:0007669"/>
    <property type="project" value="TreeGrafter"/>
</dbReference>
<dbReference type="GO" id="GO:0045927">
    <property type="term" value="P:positive regulation of growth"/>
    <property type="evidence" value="ECO:0007669"/>
    <property type="project" value="TreeGrafter"/>
</dbReference>
<dbReference type="GO" id="GO:0046427">
    <property type="term" value="P:positive regulation of receptor signaling pathway via JAK-STAT"/>
    <property type="evidence" value="ECO:0007669"/>
    <property type="project" value="TreeGrafter"/>
</dbReference>
<dbReference type="GO" id="GO:0031667">
    <property type="term" value="P:response to nutrient levels"/>
    <property type="evidence" value="ECO:0007669"/>
    <property type="project" value="TreeGrafter"/>
</dbReference>
<dbReference type="CDD" id="cd10285">
    <property type="entry name" value="somatotropin_like"/>
    <property type="match status" value="1"/>
</dbReference>
<dbReference type="FunFam" id="1.20.1250.10:FF:000009">
    <property type="entry name" value="Growth hormone"/>
    <property type="match status" value="1"/>
</dbReference>
<dbReference type="Gene3D" id="1.20.1250.10">
    <property type="match status" value="1"/>
</dbReference>
<dbReference type="InterPro" id="IPR009079">
    <property type="entry name" value="4_helix_cytokine-like_core"/>
</dbReference>
<dbReference type="InterPro" id="IPR034975">
    <property type="entry name" value="Somatotropin"/>
</dbReference>
<dbReference type="InterPro" id="IPR001400">
    <property type="entry name" value="Somatotropin/Prolactin"/>
</dbReference>
<dbReference type="InterPro" id="IPR018116">
    <property type="entry name" value="Somatotropin_CS"/>
</dbReference>
<dbReference type="PANTHER" id="PTHR11417:SF2">
    <property type="entry name" value="SOMATOTROPIN"/>
    <property type="match status" value="1"/>
</dbReference>
<dbReference type="PANTHER" id="PTHR11417">
    <property type="entry name" value="SOMATOTROPIN,PROLACTIN"/>
    <property type="match status" value="1"/>
</dbReference>
<dbReference type="Pfam" id="PF00103">
    <property type="entry name" value="Hormone_1"/>
    <property type="match status" value="1"/>
</dbReference>
<dbReference type="PRINTS" id="PR00836">
    <property type="entry name" value="SOMATOTROPIN"/>
</dbReference>
<dbReference type="SUPFAM" id="SSF47266">
    <property type="entry name" value="4-helical cytokines"/>
    <property type="match status" value="1"/>
</dbReference>
<dbReference type="PROSITE" id="PS00266">
    <property type="entry name" value="SOMATOTROPIN_1"/>
    <property type="match status" value="1"/>
</dbReference>
<dbReference type="PROSITE" id="PS00338">
    <property type="entry name" value="SOMATOTROPIN_2"/>
    <property type="match status" value="1"/>
</dbReference>
<proteinExistence type="evidence at transcript level"/>
<evidence type="ECO:0000250" key="1"/>
<evidence type="ECO:0000305" key="2"/>
<comment type="function">
    <text>Growth hormone plays an important role in growth control.</text>
</comment>
<comment type="subcellular location">
    <subcellularLocation>
        <location>Secreted</location>
    </subcellularLocation>
</comment>
<comment type="similarity">
    <text evidence="2">Belongs to the somatotropin/prolactin family.</text>
</comment>
<keyword id="KW-1015">Disulfide bond</keyword>
<keyword id="KW-0372">Hormone</keyword>
<keyword id="KW-0479">Metal-binding</keyword>
<keyword id="KW-0964">Secreted</keyword>
<keyword id="KW-0732">Signal</keyword>
<keyword id="KW-0862">Zinc</keyword>
<accession>P69159</accession>
<accession>P20390</accession>
<accession>Q00220</accession>
<accession>Q00221</accession>
<organism>
    <name type="scientific">Hypophthalmichthys molitrix</name>
    <name type="common">Silver carp</name>
    <name type="synonym">Leuciscus molitrix</name>
    <dbReference type="NCBI Taxonomy" id="13095"/>
    <lineage>
        <taxon>Eukaryota</taxon>
        <taxon>Metazoa</taxon>
        <taxon>Chordata</taxon>
        <taxon>Craniata</taxon>
        <taxon>Vertebrata</taxon>
        <taxon>Euteleostomi</taxon>
        <taxon>Actinopterygii</taxon>
        <taxon>Neopterygii</taxon>
        <taxon>Teleostei</taxon>
        <taxon>Ostariophysi</taxon>
        <taxon>Cypriniformes</taxon>
        <taxon>Xenocyprididae</taxon>
        <taxon>Xenocypridinae</taxon>
        <taxon>Hypophthalmichthys</taxon>
    </lineage>
</organism>